<name>GLMU_CYAP4</name>
<keyword id="KW-0012">Acyltransferase</keyword>
<keyword id="KW-0133">Cell shape</keyword>
<keyword id="KW-0961">Cell wall biogenesis/degradation</keyword>
<keyword id="KW-0963">Cytoplasm</keyword>
<keyword id="KW-0460">Magnesium</keyword>
<keyword id="KW-0479">Metal-binding</keyword>
<keyword id="KW-0511">Multifunctional enzyme</keyword>
<keyword id="KW-0548">Nucleotidyltransferase</keyword>
<keyword id="KW-0573">Peptidoglycan synthesis</keyword>
<keyword id="KW-0677">Repeat</keyword>
<keyword id="KW-0808">Transferase</keyword>
<feature type="chain" id="PRO_1000186434" description="Bifunctional protein GlmU">
    <location>
        <begin position="1"/>
        <end position="453"/>
    </location>
</feature>
<feature type="region of interest" description="Pyrophosphorylase" evidence="1">
    <location>
        <begin position="1"/>
        <end position="226"/>
    </location>
</feature>
<feature type="region of interest" description="Linker" evidence="1">
    <location>
        <begin position="227"/>
        <end position="247"/>
    </location>
</feature>
<feature type="region of interest" description="N-acetyltransferase" evidence="1">
    <location>
        <begin position="248"/>
        <end position="453"/>
    </location>
</feature>
<feature type="active site" description="Proton acceptor" evidence="1">
    <location>
        <position position="359"/>
    </location>
</feature>
<feature type="binding site" evidence="1">
    <location>
        <begin position="7"/>
        <end position="10"/>
    </location>
    <ligand>
        <name>UDP-N-acetyl-alpha-D-glucosamine</name>
        <dbReference type="ChEBI" id="CHEBI:57705"/>
    </ligand>
</feature>
<feature type="binding site" evidence="1">
    <location>
        <position position="21"/>
    </location>
    <ligand>
        <name>UDP-N-acetyl-alpha-D-glucosamine</name>
        <dbReference type="ChEBI" id="CHEBI:57705"/>
    </ligand>
</feature>
<feature type="binding site" evidence="1">
    <location>
        <position position="73"/>
    </location>
    <ligand>
        <name>UDP-N-acetyl-alpha-D-glucosamine</name>
        <dbReference type="ChEBI" id="CHEBI:57705"/>
    </ligand>
</feature>
<feature type="binding site" evidence="1">
    <location>
        <begin position="78"/>
        <end position="79"/>
    </location>
    <ligand>
        <name>UDP-N-acetyl-alpha-D-glucosamine</name>
        <dbReference type="ChEBI" id="CHEBI:57705"/>
    </ligand>
</feature>
<feature type="binding site" evidence="1">
    <location>
        <position position="103"/>
    </location>
    <ligand>
        <name>Mg(2+)</name>
        <dbReference type="ChEBI" id="CHEBI:18420"/>
    </ligand>
</feature>
<feature type="binding site" evidence="1">
    <location>
        <position position="140"/>
    </location>
    <ligand>
        <name>UDP-N-acetyl-alpha-D-glucosamine</name>
        <dbReference type="ChEBI" id="CHEBI:57705"/>
    </ligand>
</feature>
<feature type="binding site" evidence="1">
    <location>
        <position position="155"/>
    </location>
    <ligand>
        <name>UDP-N-acetyl-alpha-D-glucosamine</name>
        <dbReference type="ChEBI" id="CHEBI:57705"/>
    </ligand>
</feature>
<feature type="binding site" evidence="1">
    <location>
        <position position="170"/>
    </location>
    <ligand>
        <name>UDP-N-acetyl-alpha-D-glucosamine</name>
        <dbReference type="ChEBI" id="CHEBI:57705"/>
    </ligand>
</feature>
<feature type="binding site" evidence="1">
    <location>
        <position position="224"/>
    </location>
    <ligand>
        <name>Mg(2+)</name>
        <dbReference type="ChEBI" id="CHEBI:18420"/>
    </ligand>
</feature>
<feature type="binding site" evidence="1">
    <location>
        <position position="224"/>
    </location>
    <ligand>
        <name>UDP-N-acetyl-alpha-D-glucosamine</name>
        <dbReference type="ChEBI" id="CHEBI:57705"/>
    </ligand>
</feature>
<feature type="binding site" evidence="1">
    <location>
        <position position="329"/>
    </location>
    <ligand>
        <name>UDP-N-acetyl-alpha-D-glucosamine</name>
        <dbReference type="ChEBI" id="CHEBI:57705"/>
    </ligand>
</feature>
<feature type="binding site" evidence="1">
    <location>
        <position position="347"/>
    </location>
    <ligand>
        <name>UDP-N-acetyl-alpha-D-glucosamine</name>
        <dbReference type="ChEBI" id="CHEBI:57705"/>
    </ligand>
</feature>
<feature type="binding site" evidence="1">
    <location>
        <position position="362"/>
    </location>
    <ligand>
        <name>UDP-N-acetyl-alpha-D-glucosamine</name>
        <dbReference type="ChEBI" id="CHEBI:57705"/>
    </ligand>
</feature>
<feature type="binding site" evidence="1">
    <location>
        <position position="373"/>
    </location>
    <ligand>
        <name>UDP-N-acetyl-alpha-D-glucosamine</name>
        <dbReference type="ChEBI" id="CHEBI:57705"/>
    </ligand>
</feature>
<feature type="binding site" evidence="1">
    <location>
        <position position="376"/>
    </location>
    <ligand>
        <name>acetyl-CoA</name>
        <dbReference type="ChEBI" id="CHEBI:57288"/>
    </ligand>
</feature>
<feature type="binding site" evidence="1">
    <location>
        <begin position="382"/>
        <end position="383"/>
    </location>
    <ligand>
        <name>acetyl-CoA</name>
        <dbReference type="ChEBI" id="CHEBI:57288"/>
    </ligand>
</feature>
<feature type="binding site" evidence="1">
    <location>
        <position position="401"/>
    </location>
    <ligand>
        <name>acetyl-CoA</name>
        <dbReference type="ChEBI" id="CHEBI:57288"/>
    </ligand>
</feature>
<feature type="binding site" evidence="1">
    <location>
        <position position="419"/>
    </location>
    <ligand>
        <name>acetyl-CoA</name>
        <dbReference type="ChEBI" id="CHEBI:57288"/>
    </ligand>
</feature>
<feature type="binding site" evidence="1">
    <location>
        <position position="436"/>
    </location>
    <ligand>
        <name>acetyl-CoA</name>
        <dbReference type="ChEBI" id="CHEBI:57288"/>
    </ligand>
</feature>
<accession>B8HXB5</accession>
<comment type="function">
    <text evidence="1">Catalyzes the last two sequential reactions in the de novo biosynthetic pathway for UDP-N-acetylglucosamine (UDP-GlcNAc). The C-terminal domain catalyzes the transfer of acetyl group from acetyl coenzyme A to glucosamine-1-phosphate (GlcN-1-P) to produce N-acetylglucosamine-1-phosphate (GlcNAc-1-P), which is converted into UDP-GlcNAc by the transfer of uridine 5-monophosphate (from uridine 5-triphosphate), a reaction catalyzed by the N-terminal domain.</text>
</comment>
<comment type="catalytic activity">
    <reaction evidence="1">
        <text>alpha-D-glucosamine 1-phosphate + acetyl-CoA = N-acetyl-alpha-D-glucosamine 1-phosphate + CoA + H(+)</text>
        <dbReference type="Rhea" id="RHEA:13725"/>
        <dbReference type="ChEBI" id="CHEBI:15378"/>
        <dbReference type="ChEBI" id="CHEBI:57287"/>
        <dbReference type="ChEBI" id="CHEBI:57288"/>
        <dbReference type="ChEBI" id="CHEBI:57776"/>
        <dbReference type="ChEBI" id="CHEBI:58516"/>
        <dbReference type="EC" id="2.3.1.157"/>
    </reaction>
</comment>
<comment type="catalytic activity">
    <reaction evidence="1">
        <text>N-acetyl-alpha-D-glucosamine 1-phosphate + UTP + H(+) = UDP-N-acetyl-alpha-D-glucosamine + diphosphate</text>
        <dbReference type="Rhea" id="RHEA:13509"/>
        <dbReference type="ChEBI" id="CHEBI:15378"/>
        <dbReference type="ChEBI" id="CHEBI:33019"/>
        <dbReference type="ChEBI" id="CHEBI:46398"/>
        <dbReference type="ChEBI" id="CHEBI:57705"/>
        <dbReference type="ChEBI" id="CHEBI:57776"/>
        <dbReference type="EC" id="2.7.7.23"/>
    </reaction>
</comment>
<comment type="cofactor">
    <cofactor evidence="1">
        <name>Mg(2+)</name>
        <dbReference type="ChEBI" id="CHEBI:18420"/>
    </cofactor>
    <text evidence="1">Binds 1 Mg(2+) ion per subunit.</text>
</comment>
<comment type="pathway">
    <text evidence="1">Nucleotide-sugar biosynthesis; UDP-N-acetyl-alpha-D-glucosamine biosynthesis; N-acetyl-alpha-D-glucosamine 1-phosphate from alpha-D-glucosamine 6-phosphate (route II): step 2/2.</text>
</comment>
<comment type="pathway">
    <text evidence="1">Nucleotide-sugar biosynthesis; UDP-N-acetyl-alpha-D-glucosamine biosynthesis; UDP-N-acetyl-alpha-D-glucosamine from N-acetyl-alpha-D-glucosamine 1-phosphate: step 1/1.</text>
</comment>
<comment type="pathway">
    <text evidence="1">Bacterial outer membrane biogenesis; LPS lipid A biosynthesis.</text>
</comment>
<comment type="subunit">
    <text evidence="1">Homotrimer.</text>
</comment>
<comment type="subcellular location">
    <subcellularLocation>
        <location evidence="1">Cytoplasm</location>
    </subcellularLocation>
</comment>
<comment type="similarity">
    <text evidence="1">In the N-terminal section; belongs to the N-acetylglucosamine-1-phosphate uridyltransferase family.</text>
</comment>
<comment type="similarity">
    <text evidence="1">In the C-terminal section; belongs to the transferase hexapeptide repeat family.</text>
</comment>
<proteinExistence type="inferred from homology"/>
<evidence type="ECO:0000255" key="1">
    <source>
        <dbReference type="HAMAP-Rule" id="MF_01631"/>
    </source>
</evidence>
<protein>
    <recommendedName>
        <fullName evidence="1">Bifunctional protein GlmU</fullName>
    </recommendedName>
    <domain>
        <recommendedName>
            <fullName evidence="1">UDP-N-acetylglucosamine pyrophosphorylase</fullName>
            <ecNumber evidence="1">2.7.7.23</ecNumber>
        </recommendedName>
        <alternativeName>
            <fullName evidence="1">N-acetylglucosamine-1-phosphate uridyltransferase</fullName>
        </alternativeName>
    </domain>
    <domain>
        <recommendedName>
            <fullName evidence="1">Glucosamine-1-phosphate N-acetyltransferase</fullName>
            <ecNumber evidence="1">2.3.1.157</ecNumber>
        </recommendedName>
    </domain>
</protein>
<gene>
    <name evidence="1" type="primary">glmU</name>
    <name type="ordered locus">Cyan7425_2448</name>
</gene>
<sequence length="453" mass="48986">MVAIAILAAGKGTRMKSGLPKVLHSLGGRSLLGWVLNSAAEVEPERQIVIVGYRSEMVRESLQAVPGLEFVEQAEQLGTGHAVQQVIPLLQGYEDSLLVLNGDVPLLRPQTLKLLLDTHRRHNNAATLLTAHVPDPKGYGRVICDGNNILKQIIEDRDCTPAQKQNHRVNAGIYCFRWPDLAEVLPKLQANNNQQEYYLTDVVNDLSPVMAVDVEDYEEILGINDRKQLALAYQILQNRIKDQAMAAGVTLIDPDSITIDDTVKLEVDVVIEPQTHLRGHTTIGTGSRIGPGSLIENSQIGANVTISYSVVSDSVIQAGTRVGPYAHLRGHVEVGSQCRIGNFVELKNTKLGDRTNAAHLAYLGDTTTGTGVNIGAGTITANYDGVKKHRTQIGDRTKTGSNSVLVAPLILGNDVTVAAGSTITENVPDDCLAVARSRQVVKPGWRLKQPDPT</sequence>
<organism>
    <name type="scientific">Cyanothece sp. (strain PCC 7425 / ATCC 29141)</name>
    <dbReference type="NCBI Taxonomy" id="395961"/>
    <lineage>
        <taxon>Bacteria</taxon>
        <taxon>Bacillati</taxon>
        <taxon>Cyanobacteriota</taxon>
        <taxon>Cyanophyceae</taxon>
        <taxon>Gomontiellales</taxon>
        <taxon>Cyanothecaceae</taxon>
        <taxon>Cyanothece</taxon>
    </lineage>
</organism>
<dbReference type="EC" id="2.7.7.23" evidence="1"/>
<dbReference type="EC" id="2.3.1.157" evidence="1"/>
<dbReference type="EMBL" id="CP001344">
    <property type="protein sequence ID" value="ACL44806.1"/>
    <property type="molecule type" value="Genomic_DNA"/>
</dbReference>
<dbReference type="SMR" id="B8HXB5"/>
<dbReference type="STRING" id="395961.Cyan7425_2448"/>
<dbReference type="KEGG" id="cyn:Cyan7425_2448"/>
<dbReference type="eggNOG" id="COG1207">
    <property type="taxonomic scope" value="Bacteria"/>
</dbReference>
<dbReference type="HOGENOM" id="CLU_029499_15_2_3"/>
<dbReference type="OrthoDB" id="9775031at2"/>
<dbReference type="UniPathway" id="UPA00113">
    <property type="reaction ID" value="UER00532"/>
</dbReference>
<dbReference type="UniPathway" id="UPA00113">
    <property type="reaction ID" value="UER00533"/>
</dbReference>
<dbReference type="UniPathway" id="UPA00973"/>
<dbReference type="GO" id="GO:0031470">
    <property type="term" value="C:carboxysome"/>
    <property type="evidence" value="ECO:0007669"/>
    <property type="project" value="UniProtKB-ARBA"/>
</dbReference>
<dbReference type="GO" id="GO:0005737">
    <property type="term" value="C:cytoplasm"/>
    <property type="evidence" value="ECO:0007669"/>
    <property type="project" value="UniProtKB-SubCell"/>
</dbReference>
<dbReference type="GO" id="GO:0016020">
    <property type="term" value="C:membrane"/>
    <property type="evidence" value="ECO:0007669"/>
    <property type="project" value="GOC"/>
</dbReference>
<dbReference type="GO" id="GO:0019134">
    <property type="term" value="F:glucosamine-1-phosphate N-acetyltransferase activity"/>
    <property type="evidence" value="ECO:0007669"/>
    <property type="project" value="UniProtKB-UniRule"/>
</dbReference>
<dbReference type="GO" id="GO:0000287">
    <property type="term" value="F:magnesium ion binding"/>
    <property type="evidence" value="ECO:0007669"/>
    <property type="project" value="UniProtKB-UniRule"/>
</dbReference>
<dbReference type="GO" id="GO:0043886">
    <property type="term" value="F:structural constituent of carboxysome shell"/>
    <property type="evidence" value="ECO:0007669"/>
    <property type="project" value="UniProtKB-ARBA"/>
</dbReference>
<dbReference type="GO" id="GO:0003977">
    <property type="term" value="F:UDP-N-acetylglucosamine diphosphorylase activity"/>
    <property type="evidence" value="ECO:0007669"/>
    <property type="project" value="UniProtKB-UniRule"/>
</dbReference>
<dbReference type="GO" id="GO:0000902">
    <property type="term" value="P:cell morphogenesis"/>
    <property type="evidence" value="ECO:0007669"/>
    <property type="project" value="UniProtKB-UniRule"/>
</dbReference>
<dbReference type="GO" id="GO:0071555">
    <property type="term" value="P:cell wall organization"/>
    <property type="evidence" value="ECO:0007669"/>
    <property type="project" value="UniProtKB-KW"/>
</dbReference>
<dbReference type="GO" id="GO:0009245">
    <property type="term" value="P:lipid A biosynthetic process"/>
    <property type="evidence" value="ECO:0007669"/>
    <property type="project" value="UniProtKB-UniRule"/>
</dbReference>
<dbReference type="GO" id="GO:0009252">
    <property type="term" value="P:peptidoglycan biosynthetic process"/>
    <property type="evidence" value="ECO:0007669"/>
    <property type="project" value="UniProtKB-UniRule"/>
</dbReference>
<dbReference type="GO" id="GO:0008360">
    <property type="term" value="P:regulation of cell shape"/>
    <property type="evidence" value="ECO:0007669"/>
    <property type="project" value="UniProtKB-KW"/>
</dbReference>
<dbReference type="GO" id="GO:0006048">
    <property type="term" value="P:UDP-N-acetylglucosamine biosynthetic process"/>
    <property type="evidence" value="ECO:0007669"/>
    <property type="project" value="UniProtKB-UniPathway"/>
</dbReference>
<dbReference type="CDD" id="cd02540">
    <property type="entry name" value="GT2_GlmU_N_bac"/>
    <property type="match status" value="1"/>
</dbReference>
<dbReference type="CDD" id="cd03353">
    <property type="entry name" value="LbH_GlmU_C"/>
    <property type="match status" value="1"/>
</dbReference>
<dbReference type="Gene3D" id="2.160.10.10">
    <property type="entry name" value="Hexapeptide repeat proteins"/>
    <property type="match status" value="1"/>
</dbReference>
<dbReference type="Gene3D" id="3.90.550.10">
    <property type="entry name" value="Spore Coat Polysaccharide Biosynthesis Protein SpsA, Chain A"/>
    <property type="match status" value="1"/>
</dbReference>
<dbReference type="HAMAP" id="MF_01631">
    <property type="entry name" value="GlmU"/>
    <property type="match status" value="1"/>
</dbReference>
<dbReference type="InterPro" id="IPR005882">
    <property type="entry name" value="Bifunctional_GlmU"/>
</dbReference>
<dbReference type="InterPro" id="IPR050065">
    <property type="entry name" value="GlmU-like"/>
</dbReference>
<dbReference type="InterPro" id="IPR038009">
    <property type="entry name" value="GlmU_C_LbH"/>
</dbReference>
<dbReference type="InterPro" id="IPR001451">
    <property type="entry name" value="Hexapep"/>
</dbReference>
<dbReference type="InterPro" id="IPR025877">
    <property type="entry name" value="MobA-like_NTP_Trfase"/>
</dbReference>
<dbReference type="InterPro" id="IPR029044">
    <property type="entry name" value="Nucleotide-diphossugar_trans"/>
</dbReference>
<dbReference type="InterPro" id="IPR011004">
    <property type="entry name" value="Trimer_LpxA-like_sf"/>
</dbReference>
<dbReference type="NCBIfam" id="TIGR01173">
    <property type="entry name" value="glmU"/>
    <property type="match status" value="1"/>
</dbReference>
<dbReference type="NCBIfam" id="NF010940">
    <property type="entry name" value="PRK14360.1"/>
    <property type="match status" value="1"/>
</dbReference>
<dbReference type="PANTHER" id="PTHR43584:SF3">
    <property type="entry name" value="BIFUNCTIONAL PROTEIN GLMU"/>
    <property type="match status" value="1"/>
</dbReference>
<dbReference type="PANTHER" id="PTHR43584">
    <property type="entry name" value="NUCLEOTIDYL TRANSFERASE"/>
    <property type="match status" value="1"/>
</dbReference>
<dbReference type="Pfam" id="PF00132">
    <property type="entry name" value="Hexapep"/>
    <property type="match status" value="1"/>
</dbReference>
<dbReference type="Pfam" id="PF14602">
    <property type="entry name" value="Hexapep_2"/>
    <property type="match status" value="1"/>
</dbReference>
<dbReference type="Pfam" id="PF12804">
    <property type="entry name" value="NTP_transf_3"/>
    <property type="match status" value="1"/>
</dbReference>
<dbReference type="SUPFAM" id="SSF53448">
    <property type="entry name" value="Nucleotide-diphospho-sugar transferases"/>
    <property type="match status" value="1"/>
</dbReference>
<dbReference type="SUPFAM" id="SSF51161">
    <property type="entry name" value="Trimeric LpxA-like enzymes"/>
    <property type="match status" value="1"/>
</dbReference>
<reference key="1">
    <citation type="journal article" date="2011" name="MBio">
        <title>Novel metabolic attributes of the genus Cyanothece, comprising a group of unicellular nitrogen-fixing Cyanobacteria.</title>
        <authorList>
            <person name="Bandyopadhyay A."/>
            <person name="Elvitigala T."/>
            <person name="Welsh E."/>
            <person name="Stockel J."/>
            <person name="Liberton M."/>
            <person name="Min H."/>
            <person name="Sherman L.A."/>
            <person name="Pakrasi H.B."/>
        </authorList>
    </citation>
    <scope>NUCLEOTIDE SEQUENCE [LARGE SCALE GENOMIC DNA]</scope>
    <source>
        <strain>PCC 7425 / ATCC 29141</strain>
    </source>
</reference>